<dbReference type="EMBL" id="AY724923">
    <property type="protein sequence ID" value="AAU21129.1"/>
    <property type="molecule type" value="Genomic_DNA"/>
</dbReference>
<dbReference type="FunCoup" id="Q645Z0">
    <property type="interactions" value="204"/>
</dbReference>
<dbReference type="STRING" id="9593.ENSGGOP00000003381"/>
<dbReference type="GlyCosmos" id="Q645Z0">
    <property type="glycosylation" value="1 site, No reported glycans"/>
</dbReference>
<dbReference type="eggNOG" id="ENOG502S2SI">
    <property type="taxonomic scope" value="Eukaryota"/>
</dbReference>
<dbReference type="InParanoid" id="Q645Z0"/>
<dbReference type="Proteomes" id="UP000001519">
    <property type="component" value="Unplaced"/>
</dbReference>
<dbReference type="GO" id="GO:0016020">
    <property type="term" value="C:membrane"/>
    <property type="evidence" value="ECO:0000318"/>
    <property type="project" value="GO_Central"/>
</dbReference>
<dbReference type="GO" id="GO:0005886">
    <property type="term" value="C:plasma membrane"/>
    <property type="evidence" value="ECO:0007669"/>
    <property type="project" value="UniProtKB-ARBA"/>
</dbReference>
<dbReference type="GO" id="GO:0033038">
    <property type="term" value="F:bitter taste receptor activity"/>
    <property type="evidence" value="ECO:0007669"/>
    <property type="project" value="InterPro"/>
</dbReference>
<dbReference type="GO" id="GO:0004930">
    <property type="term" value="F:G protein-coupled receptor activity"/>
    <property type="evidence" value="ECO:0007669"/>
    <property type="project" value="UniProtKB-KW"/>
</dbReference>
<dbReference type="CDD" id="cd15018">
    <property type="entry name" value="7tm_TAS2R41-like"/>
    <property type="match status" value="1"/>
</dbReference>
<dbReference type="FunFam" id="1.20.1070.10:FF:000055">
    <property type="entry name" value="Taste receptor type 2"/>
    <property type="match status" value="1"/>
</dbReference>
<dbReference type="Gene3D" id="1.20.1070.10">
    <property type="entry name" value="Rhodopsin 7-helix transmembrane proteins"/>
    <property type="match status" value="1"/>
</dbReference>
<dbReference type="InterPro" id="IPR007960">
    <property type="entry name" value="TAS2R"/>
</dbReference>
<dbReference type="PANTHER" id="PTHR11394">
    <property type="entry name" value="TASTE RECEPTOR TYPE 2"/>
    <property type="match status" value="1"/>
</dbReference>
<dbReference type="PANTHER" id="PTHR11394:SF32">
    <property type="entry name" value="TASTE RECEPTOR TYPE 2 MEMBER 60"/>
    <property type="match status" value="1"/>
</dbReference>
<dbReference type="Pfam" id="PF05296">
    <property type="entry name" value="TAS2R"/>
    <property type="match status" value="1"/>
</dbReference>
<dbReference type="SUPFAM" id="SSF81321">
    <property type="entry name" value="Family A G protein-coupled receptor-like"/>
    <property type="match status" value="1"/>
</dbReference>
<sequence length="318" mass="36277">MNGDHMVLGSSVTDKKAIILVTILLLLRLVAIAGNGFIIAALGVEWVLRRMLLPCDXLLVSLGASRFCLQSVVMGKTIYVFLHPMAFPYNPVLQFLAFQWDFLNAATLWFSTWLSVFYCVKIAAFTHPVFLWLKHKLSGWLPWILFSSVGLSSFTTILFFIGNHRMYQNYLRNHLQPWNITGNSIRSYCEKFYLFPLKMITWTMPTAVFFICMILLITSLGRHMKKALLTTSGFREPSMQAHIKALLALLSFAMLFISYFLSLVFSAAGIFPPLDFKFWVWESVIYLCAAVHPIILLFSNCRLRAVLKSCRSSRCGTP</sequence>
<comment type="function">
    <text evidence="1">Receptor that may play a role in the perception of bitterness and is gustducin-linked. May play a role in sensing the chemical composition of the gastrointestinal content. The activity of this receptor may stimulate alpha gustducin, mediate PLC-beta-2 activation and lead to the gating of TRPM5 (By similarity).</text>
</comment>
<comment type="subcellular location">
    <subcellularLocation>
        <location>Membrane</location>
        <topology>Multi-pass membrane protein</topology>
    </subcellularLocation>
</comment>
<comment type="miscellaneous">
    <text>Most taste cells may be activated by a limited number of bitter compounds; individual taste cells can discriminate among bitter stimuli.</text>
</comment>
<comment type="similarity">
    <text evidence="3">Belongs to the G-protein coupled receptor T2R family.</text>
</comment>
<keyword id="KW-0297">G-protein coupled receptor</keyword>
<keyword id="KW-0325">Glycoprotein</keyword>
<keyword id="KW-0472">Membrane</keyword>
<keyword id="KW-0675">Receptor</keyword>
<keyword id="KW-1185">Reference proteome</keyword>
<keyword id="KW-0716">Sensory transduction</keyword>
<keyword id="KW-0919">Taste</keyword>
<keyword id="KW-0807">Transducer</keyword>
<keyword id="KW-0812">Transmembrane</keyword>
<keyword id="KW-1133">Transmembrane helix</keyword>
<reference key="1">
    <citation type="journal article" date="2005" name="Mol. Biol. Evol.">
        <title>Evolution of bitter taste receptors in humans and apes.</title>
        <authorList>
            <person name="Fischer A."/>
            <person name="Gilad Y."/>
            <person name="Man O."/>
            <person name="Paeaebo S."/>
        </authorList>
    </citation>
    <scope>NUCLEOTIDE SEQUENCE [GENOMIC DNA]</scope>
</reference>
<proteinExistence type="inferred from homology"/>
<evidence type="ECO:0000250" key="1"/>
<evidence type="ECO:0000255" key="2"/>
<evidence type="ECO:0000305" key="3"/>
<name>T2R60_GORGO</name>
<accession>Q645Z0</accession>
<organism>
    <name type="scientific">Gorilla gorilla gorilla</name>
    <name type="common">Western lowland gorilla</name>
    <dbReference type="NCBI Taxonomy" id="9595"/>
    <lineage>
        <taxon>Eukaryota</taxon>
        <taxon>Metazoa</taxon>
        <taxon>Chordata</taxon>
        <taxon>Craniata</taxon>
        <taxon>Vertebrata</taxon>
        <taxon>Euteleostomi</taxon>
        <taxon>Mammalia</taxon>
        <taxon>Eutheria</taxon>
        <taxon>Euarchontoglires</taxon>
        <taxon>Primates</taxon>
        <taxon>Haplorrhini</taxon>
        <taxon>Catarrhini</taxon>
        <taxon>Hominidae</taxon>
        <taxon>Gorilla</taxon>
    </lineage>
</organism>
<feature type="chain" id="PRO_0000082350" description="Taste receptor type 2 member 60">
    <location>
        <begin position="1"/>
        <end position="318"/>
    </location>
</feature>
<feature type="topological domain" description="Extracellular" evidence="2">
    <location>
        <begin position="1"/>
        <end position="7"/>
    </location>
</feature>
<feature type="transmembrane region" description="Helical; Name=1" evidence="2">
    <location>
        <begin position="8"/>
        <end position="28"/>
    </location>
</feature>
<feature type="topological domain" description="Cytoplasmic" evidence="2">
    <location>
        <begin position="29"/>
        <end position="40"/>
    </location>
</feature>
<feature type="transmembrane region" description="Helical; Name=2" evidence="2">
    <location>
        <begin position="41"/>
        <end position="61"/>
    </location>
</feature>
<feature type="topological domain" description="Extracellular" evidence="2">
    <location>
        <begin position="62"/>
        <end position="88"/>
    </location>
</feature>
<feature type="transmembrane region" description="Helical; Name=3" evidence="2">
    <location>
        <begin position="89"/>
        <end position="109"/>
    </location>
</feature>
<feature type="topological domain" description="Cytoplasmic" evidence="2">
    <location>
        <begin position="110"/>
        <end position="128"/>
    </location>
</feature>
<feature type="transmembrane region" description="Helical; Name=4" evidence="2">
    <location>
        <begin position="129"/>
        <end position="149"/>
    </location>
</feature>
<feature type="topological domain" description="Extracellular" evidence="2">
    <location>
        <begin position="150"/>
        <end position="183"/>
    </location>
</feature>
<feature type="transmembrane region" description="Helical; Name=5" evidence="2">
    <location>
        <begin position="184"/>
        <end position="204"/>
    </location>
</feature>
<feature type="topological domain" description="Cytoplasmic" evidence="2">
    <location>
        <begin position="205"/>
        <end position="234"/>
    </location>
</feature>
<feature type="transmembrane region" description="Helical; Name=6" evidence="2">
    <location>
        <begin position="235"/>
        <end position="255"/>
    </location>
</feature>
<feature type="topological domain" description="Extracellular" evidence="2">
    <location>
        <begin position="256"/>
        <end position="264"/>
    </location>
</feature>
<feature type="transmembrane region" description="Helical; Name=7" evidence="2">
    <location>
        <begin position="265"/>
        <end position="285"/>
    </location>
</feature>
<feature type="topological domain" description="Cytoplasmic" evidence="2">
    <location>
        <begin position="286"/>
        <end position="318"/>
    </location>
</feature>
<feature type="glycosylation site" description="N-linked (GlcNAc...) asparagine" evidence="2">
    <location>
        <position position="179"/>
    </location>
</feature>
<protein>
    <recommendedName>
        <fullName>Taste receptor type 2 member 60</fullName>
        <shortName>T2R60</shortName>
    </recommendedName>
    <alternativeName>
        <fullName>T2R56</fullName>
    </alternativeName>
</protein>
<gene>
    <name type="primary">TAS2R60</name>
</gene>